<protein>
    <recommendedName>
        <fullName evidence="1">Putative antitoxin VapB21</fullName>
    </recommendedName>
</protein>
<name>VPB21_SULTO</name>
<organism>
    <name type="scientific">Sulfurisphaera tokodaii (strain DSM 16993 / JCM 10545 / NBRC 100140 / 7)</name>
    <name type="common">Sulfolobus tokodaii</name>
    <dbReference type="NCBI Taxonomy" id="273063"/>
    <lineage>
        <taxon>Archaea</taxon>
        <taxon>Thermoproteota</taxon>
        <taxon>Thermoprotei</taxon>
        <taxon>Sulfolobales</taxon>
        <taxon>Sulfolobaceae</taxon>
        <taxon>Sulfurisphaera</taxon>
    </lineage>
</organism>
<keyword id="KW-1185">Reference proteome</keyword>
<keyword id="KW-1277">Toxin-antitoxin system</keyword>
<proteinExistence type="inferred from homology"/>
<dbReference type="EMBL" id="BA000023">
    <property type="protein sequence ID" value="BAB67037.1"/>
    <property type="molecule type" value="Genomic_DNA"/>
</dbReference>
<dbReference type="RefSeq" id="WP_010980013.1">
    <property type="nucleotide sequence ID" value="NC_003106.2"/>
</dbReference>
<dbReference type="SMR" id="Q96Z89"/>
<dbReference type="GeneID" id="1460002"/>
<dbReference type="KEGG" id="sto:STK_19425"/>
<dbReference type="PATRIC" id="fig|273063.9.peg.2212"/>
<dbReference type="eggNOG" id="arCOG02681">
    <property type="taxonomic scope" value="Archaea"/>
</dbReference>
<dbReference type="OrthoDB" id="9187at2157"/>
<dbReference type="Proteomes" id="UP000001015">
    <property type="component" value="Chromosome"/>
</dbReference>
<dbReference type="HAMAP" id="MF_00794">
    <property type="entry name" value="UPF0330"/>
    <property type="match status" value="1"/>
</dbReference>
<dbReference type="InterPro" id="IPR003847">
    <property type="entry name" value="Put_antitoxin"/>
</dbReference>
<dbReference type="NCBIfam" id="NF010249">
    <property type="entry name" value="PRK13696.1-1"/>
    <property type="match status" value="1"/>
</dbReference>
<dbReference type="Pfam" id="PF02697">
    <property type="entry name" value="VAPB_antitox"/>
    <property type="match status" value="1"/>
</dbReference>
<comment type="function">
    <text evidence="1">Possibly the antitoxin component of a type II toxin-antitoxin (TA) system. Its cognate toxin is VapC21 (Potential).</text>
</comment>
<comment type="similarity">
    <text evidence="1">Belongs to the UPF0330 family.</text>
</comment>
<sequence>MAKTITISEEAYRLLLSEKREGESFSDVIIRLVKSSRKNIMDYAGIWGDMNDEEVNKLFEDLKKMWERWNVNA</sequence>
<accession>Q96Z89</accession>
<evidence type="ECO:0000255" key="1">
    <source>
        <dbReference type="HAMAP-Rule" id="MF_00794"/>
    </source>
</evidence>
<reference key="1">
    <citation type="journal article" date="2001" name="DNA Res.">
        <title>Complete genome sequence of an aerobic thermoacidophilic Crenarchaeon, Sulfolobus tokodaii strain7.</title>
        <authorList>
            <person name="Kawarabayasi Y."/>
            <person name="Hino Y."/>
            <person name="Horikawa H."/>
            <person name="Jin-no K."/>
            <person name="Takahashi M."/>
            <person name="Sekine M."/>
            <person name="Baba S."/>
            <person name="Ankai A."/>
            <person name="Kosugi H."/>
            <person name="Hosoyama A."/>
            <person name="Fukui S."/>
            <person name="Nagai Y."/>
            <person name="Nishijima K."/>
            <person name="Otsuka R."/>
            <person name="Nakazawa H."/>
            <person name="Takamiya M."/>
            <person name="Kato Y."/>
            <person name="Yoshizawa T."/>
            <person name="Tanaka T."/>
            <person name="Kudoh Y."/>
            <person name="Yamazaki J."/>
            <person name="Kushida N."/>
            <person name="Oguchi A."/>
            <person name="Aoki K."/>
            <person name="Masuda S."/>
            <person name="Yanagii M."/>
            <person name="Nishimura M."/>
            <person name="Yamagishi A."/>
            <person name="Oshima T."/>
            <person name="Kikuchi H."/>
        </authorList>
    </citation>
    <scope>NUCLEOTIDE SEQUENCE [LARGE SCALE GENOMIC DNA]</scope>
    <source>
        <strain>DSM 16993 / JCM 10545 / NBRC 100140 / 7</strain>
    </source>
</reference>
<reference key="2">
    <citation type="journal article" date="2005" name="Nucleic Acids Res.">
        <title>Toxin-antitoxin loci are highly abundant in free-living but lost from host-associated prokaryotes.</title>
        <authorList>
            <person name="Pandey D.P."/>
            <person name="Gerdes K."/>
        </authorList>
    </citation>
    <scope>POSSIBLE FUNCTION</scope>
    <source>
        <strain>DSM 16993 / JCM 10545 / NBRC 100140 / 7</strain>
    </source>
</reference>
<gene>
    <name type="primary">vapB21</name>
    <name type="ordered locus">STK_19425</name>
    <name type="ORF">STS208</name>
</gene>
<feature type="chain" id="PRO_0000157117" description="Putative antitoxin VapB21">
    <location>
        <begin position="1"/>
        <end position="73"/>
    </location>
</feature>